<comment type="function">
    <text evidence="2">Regulatory subunit of calcineurin, a calcium-dependent, calmodulin stimulated protein phosphatase. Confers calcium sensitivity.</text>
</comment>
<comment type="subunit">
    <text evidence="2 3">Forms a complex composed of a calmodulin-dependent catalytic subunit (also known as calcineurin A) and a regulatory Ca(2+)-binding subunit (also known as calcineurin B). There are three catalytic subunits, each encoded by a separate gene (PPP3CA, PPP3CB, and PPP3CC) and two regulatory subunits which are also encoded by separate genes (PPP3R1 and PPP3R2) (By similarity). Interacts with SPATA33 (via PQIIIT motif) (By similarity).</text>
</comment>
<comment type="subcellular location">
    <subcellularLocation>
        <location evidence="3">Mitochondrion</location>
    </subcellularLocation>
    <text evidence="3">Localizes in the mitochondria in a SPATA33-dependent manner.</text>
</comment>
<comment type="tissue specificity">
    <text evidence="5">Testis specific.</text>
</comment>
<comment type="miscellaneous">
    <text evidence="2">This protein has four functional calcium-binding sites.</text>
</comment>
<comment type="similarity">
    <text evidence="6">Belongs to the calcineurin regulatory subunit family.</text>
</comment>
<comment type="sequence caution" evidence="6">
    <conflict type="erroneous initiation">
        <sequence resource="EMBL-CDS" id="AAB20281"/>
    </conflict>
</comment>
<name>CANB2_RAT</name>
<keyword id="KW-0106">Calcium</keyword>
<keyword id="KW-0449">Lipoprotein</keyword>
<keyword id="KW-0479">Metal-binding</keyword>
<keyword id="KW-0496">Mitochondrion</keyword>
<keyword id="KW-0519">Myristate</keyword>
<keyword id="KW-1185">Reference proteome</keyword>
<keyword id="KW-0677">Repeat</keyword>
<reference key="1">
    <citation type="journal article" date="1991" name="Biochem. Biophys. Res. Commun.">
        <title>cDNA cloning of a novel testis-specific calcineurin B-like protein.</title>
        <authorList>
            <person name="Mukai H."/>
            <person name="Chang C.D."/>
            <person name="Tanaka H."/>
            <person name="Ito A."/>
            <person name="Kuno T."/>
            <person name="Tanaka C."/>
        </authorList>
    </citation>
    <scope>NUCLEOTIDE SEQUENCE [MRNA]</scope>
    <scope>TISSUE SPECIFICITY</scope>
    <source>
        <tissue>Testis</tissue>
    </source>
</reference>
<evidence type="ECO:0000250" key="1">
    <source>
        <dbReference type="UniProtKB" id="P63098"/>
    </source>
</evidence>
<evidence type="ECO:0000250" key="2">
    <source>
        <dbReference type="UniProtKB" id="P63100"/>
    </source>
</evidence>
<evidence type="ECO:0000250" key="3">
    <source>
        <dbReference type="UniProtKB" id="Q63811"/>
    </source>
</evidence>
<evidence type="ECO:0000255" key="4">
    <source>
        <dbReference type="PROSITE-ProRule" id="PRU00448"/>
    </source>
</evidence>
<evidence type="ECO:0000269" key="5">
    <source>
    </source>
</evidence>
<evidence type="ECO:0000305" key="6"/>
<feature type="initiator methionine" description="Removed">
    <location>
        <position position="1"/>
    </location>
</feature>
<feature type="chain" id="PRO_0000073501" description="Calcineurin subunit B type 2">
    <location>
        <begin position="2"/>
        <end position="176"/>
    </location>
</feature>
<feature type="domain" description="EF-hand 1" evidence="4">
    <location>
        <begin position="18"/>
        <end position="53"/>
    </location>
</feature>
<feature type="domain" description="EF-hand 2" evidence="4">
    <location>
        <begin position="57"/>
        <end position="85"/>
    </location>
</feature>
<feature type="domain" description="EF-hand 3" evidence="4">
    <location>
        <begin position="87"/>
        <end position="122"/>
    </location>
</feature>
<feature type="domain" description="EF-hand 4" evidence="4">
    <location>
        <begin position="128"/>
        <end position="163"/>
    </location>
</feature>
<feature type="region of interest" description="Calcineurin A binding" evidence="1">
    <location>
        <begin position="131"/>
        <end position="136"/>
    </location>
</feature>
<feature type="binding site" evidence="4">
    <location>
        <position position="31"/>
    </location>
    <ligand>
        <name>Ca(2+)</name>
        <dbReference type="ChEBI" id="CHEBI:29108"/>
        <label>1</label>
    </ligand>
</feature>
<feature type="binding site" evidence="4">
    <location>
        <position position="33"/>
    </location>
    <ligand>
        <name>Ca(2+)</name>
        <dbReference type="ChEBI" id="CHEBI:29108"/>
        <label>1</label>
    </ligand>
</feature>
<feature type="binding site" evidence="4">
    <location>
        <position position="35"/>
    </location>
    <ligand>
        <name>Ca(2+)</name>
        <dbReference type="ChEBI" id="CHEBI:29108"/>
        <label>1</label>
    </ligand>
</feature>
<feature type="binding site" evidence="4">
    <location>
        <position position="37"/>
    </location>
    <ligand>
        <name>Ca(2+)</name>
        <dbReference type="ChEBI" id="CHEBI:29108"/>
        <label>1</label>
    </ligand>
</feature>
<feature type="binding site" evidence="4">
    <location>
        <position position="42"/>
    </location>
    <ligand>
        <name>Ca(2+)</name>
        <dbReference type="ChEBI" id="CHEBI:29108"/>
        <label>1</label>
    </ligand>
</feature>
<feature type="binding site" evidence="4">
    <location>
        <position position="63"/>
    </location>
    <ligand>
        <name>Ca(2+)</name>
        <dbReference type="ChEBI" id="CHEBI:29108"/>
        <label>2</label>
    </ligand>
</feature>
<feature type="binding site" evidence="4">
    <location>
        <position position="65"/>
    </location>
    <ligand>
        <name>Ca(2+)</name>
        <dbReference type="ChEBI" id="CHEBI:29108"/>
        <label>2</label>
    </ligand>
</feature>
<feature type="binding site" evidence="4">
    <location>
        <position position="67"/>
    </location>
    <ligand>
        <name>Ca(2+)</name>
        <dbReference type="ChEBI" id="CHEBI:29108"/>
        <label>2</label>
    </ligand>
</feature>
<feature type="binding site" evidence="4">
    <location>
        <position position="69"/>
    </location>
    <ligand>
        <name>Ca(2+)</name>
        <dbReference type="ChEBI" id="CHEBI:29108"/>
        <label>2</label>
    </ligand>
</feature>
<feature type="binding site" evidence="4">
    <location>
        <position position="74"/>
    </location>
    <ligand>
        <name>Ca(2+)</name>
        <dbReference type="ChEBI" id="CHEBI:29108"/>
        <label>2</label>
    </ligand>
</feature>
<feature type="binding site" evidence="4">
    <location>
        <position position="100"/>
    </location>
    <ligand>
        <name>Ca(2+)</name>
        <dbReference type="ChEBI" id="CHEBI:29108"/>
        <label>3</label>
    </ligand>
</feature>
<feature type="binding site" evidence="4">
    <location>
        <position position="102"/>
    </location>
    <ligand>
        <name>Ca(2+)</name>
        <dbReference type="ChEBI" id="CHEBI:29108"/>
        <label>3</label>
    </ligand>
</feature>
<feature type="binding site" evidence="4">
    <location>
        <position position="104"/>
    </location>
    <ligand>
        <name>Ca(2+)</name>
        <dbReference type="ChEBI" id="CHEBI:29108"/>
        <label>3</label>
    </ligand>
</feature>
<feature type="binding site" evidence="4">
    <location>
        <position position="111"/>
    </location>
    <ligand>
        <name>Ca(2+)</name>
        <dbReference type="ChEBI" id="CHEBI:29108"/>
        <label>3</label>
    </ligand>
</feature>
<feature type="binding site" evidence="4">
    <location>
        <position position="141"/>
    </location>
    <ligand>
        <name>Ca(2+)</name>
        <dbReference type="ChEBI" id="CHEBI:29108"/>
        <label>4</label>
    </ligand>
</feature>
<feature type="binding site" evidence="4">
    <location>
        <position position="143"/>
    </location>
    <ligand>
        <name>Ca(2+)</name>
        <dbReference type="ChEBI" id="CHEBI:29108"/>
        <label>4</label>
    </ligand>
</feature>
<feature type="binding site" evidence="4">
    <location>
        <position position="145"/>
    </location>
    <ligand>
        <name>Ca(2+)</name>
        <dbReference type="ChEBI" id="CHEBI:29108"/>
        <label>4</label>
    </ligand>
</feature>
<feature type="binding site" evidence="4">
    <location>
        <position position="147"/>
    </location>
    <ligand>
        <name>Ca(2+)</name>
        <dbReference type="ChEBI" id="CHEBI:29108"/>
        <label>4</label>
    </ligand>
</feature>
<feature type="binding site" evidence="4">
    <location>
        <position position="152"/>
    </location>
    <ligand>
        <name>Ca(2+)</name>
        <dbReference type="ChEBI" id="CHEBI:29108"/>
        <label>4</label>
    </ligand>
</feature>
<feature type="site" description="Interaction with PxVP motif in substrates of the catalytic subunit" evidence="1">
    <location>
        <position position="118"/>
    </location>
</feature>
<feature type="site" description="Interaction with PxVP motif in substrates of the catalytic subunit" evidence="1">
    <location>
        <position position="122"/>
    </location>
</feature>
<feature type="lipid moiety-binding region" description="N-myristoyl glycine" evidence="2">
    <location>
        <position position="2"/>
    </location>
</feature>
<dbReference type="EMBL" id="D10393">
    <property type="protein sequence ID" value="BAA01232.1"/>
    <property type="molecule type" value="mRNA"/>
</dbReference>
<dbReference type="EMBL" id="S63991">
    <property type="protein sequence ID" value="AAB20281.1"/>
    <property type="status" value="ALT_INIT"/>
    <property type="molecule type" value="mRNA"/>
</dbReference>
<dbReference type="PIR" id="JQ1232">
    <property type="entry name" value="JQ1232"/>
</dbReference>
<dbReference type="PIR" id="PS0261">
    <property type="entry name" value="PS0261"/>
</dbReference>
<dbReference type="RefSeq" id="NP_067733.1">
    <property type="nucleotide sequence ID" value="NM_021701.2"/>
</dbReference>
<dbReference type="SMR" id="P28470"/>
<dbReference type="FunCoup" id="P28470">
    <property type="interactions" value="627"/>
</dbReference>
<dbReference type="STRING" id="10116.ENSRNOP00000007290"/>
<dbReference type="PhosphoSitePlus" id="P28470"/>
<dbReference type="PaxDb" id="10116-ENSRNOP00000007290"/>
<dbReference type="GeneID" id="29749"/>
<dbReference type="KEGG" id="rno:29749"/>
<dbReference type="UCSC" id="RGD:69232">
    <property type="organism name" value="rat"/>
</dbReference>
<dbReference type="AGR" id="RGD:69232"/>
<dbReference type="CTD" id="5535"/>
<dbReference type="RGD" id="69232">
    <property type="gene designation" value="Ppp3r2"/>
</dbReference>
<dbReference type="eggNOG" id="KOG0034">
    <property type="taxonomic scope" value="Eukaryota"/>
</dbReference>
<dbReference type="HOGENOM" id="CLU_061288_10_1_1"/>
<dbReference type="InParanoid" id="P28470"/>
<dbReference type="OrthoDB" id="191686at2759"/>
<dbReference type="PhylomeDB" id="P28470"/>
<dbReference type="TreeFam" id="TF105558"/>
<dbReference type="PRO" id="PR:P28470"/>
<dbReference type="Proteomes" id="UP000002494">
    <property type="component" value="Chromosome 5"/>
</dbReference>
<dbReference type="Bgee" id="ENSRNOG00000005368">
    <property type="expression patterns" value="Expressed in testis"/>
</dbReference>
<dbReference type="GO" id="GO:0005955">
    <property type="term" value="C:calcineurin complex"/>
    <property type="evidence" value="ECO:0000266"/>
    <property type="project" value="RGD"/>
</dbReference>
<dbReference type="GO" id="GO:0005829">
    <property type="term" value="C:cytosol"/>
    <property type="evidence" value="ECO:0000304"/>
    <property type="project" value="Reactome"/>
</dbReference>
<dbReference type="GO" id="GO:0005739">
    <property type="term" value="C:mitochondrion"/>
    <property type="evidence" value="ECO:0007669"/>
    <property type="project" value="UniProtKB-SubCell"/>
</dbReference>
<dbReference type="GO" id="GO:0036126">
    <property type="term" value="C:sperm flagellum"/>
    <property type="evidence" value="ECO:0000266"/>
    <property type="project" value="RGD"/>
</dbReference>
<dbReference type="GO" id="GO:0097225">
    <property type="term" value="C:sperm midpiece"/>
    <property type="evidence" value="ECO:0000266"/>
    <property type="project" value="RGD"/>
</dbReference>
<dbReference type="GO" id="GO:0097226">
    <property type="term" value="C:sperm mitochondrial sheath"/>
    <property type="evidence" value="ECO:0000266"/>
    <property type="project" value="RGD"/>
</dbReference>
<dbReference type="GO" id="GO:0005509">
    <property type="term" value="F:calcium ion binding"/>
    <property type="evidence" value="ECO:0007669"/>
    <property type="project" value="InterPro"/>
</dbReference>
<dbReference type="GO" id="GO:0008597">
    <property type="term" value="F:calcium-dependent protein serine/threonine phosphatase regulator activity"/>
    <property type="evidence" value="ECO:0000266"/>
    <property type="project" value="RGD"/>
</dbReference>
<dbReference type="GO" id="GO:0019902">
    <property type="term" value="F:phosphatase binding"/>
    <property type="evidence" value="ECO:0000318"/>
    <property type="project" value="GO_Central"/>
</dbReference>
<dbReference type="GO" id="GO:0097720">
    <property type="term" value="P:calcineurin-mediated signaling"/>
    <property type="evidence" value="ECO:0000318"/>
    <property type="project" value="GO_Central"/>
</dbReference>
<dbReference type="GO" id="GO:0007341">
    <property type="term" value="P:penetration of zona pellucida"/>
    <property type="evidence" value="ECO:0000266"/>
    <property type="project" value="RGD"/>
</dbReference>
<dbReference type="CDD" id="cd00051">
    <property type="entry name" value="EFh"/>
    <property type="match status" value="1"/>
</dbReference>
<dbReference type="FunFam" id="1.10.238.10:FF:000047">
    <property type="entry name" value="Calcineurin subunit B type 1"/>
    <property type="match status" value="1"/>
</dbReference>
<dbReference type="Gene3D" id="1.10.238.10">
    <property type="entry name" value="EF-hand"/>
    <property type="match status" value="1"/>
</dbReference>
<dbReference type="InterPro" id="IPR011992">
    <property type="entry name" value="EF-hand-dom_pair"/>
</dbReference>
<dbReference type="InterPro" id="IPR018247">
    <property type="entry name" value="EF_Hand_1_Ca_BS"/>
</dbReference>
<dbReference type="InterPro" id="IPR002048">
    <property type="entry name" value="EF_hand_dom"/>
</dbReference>
<dbReference type="PANTHER" id="PTHR45942">
    <property type="entry name" value="PROTEIN PHOSPATASE 3 REGULATORY SUBUNIT B ALPHA ISOFORM TYPE 1"/>
    <property type="match status" value="1"/>
</dbReference>
<dbReference type="Pfam" id="PF13499">
    <property type="entry name" value="EF-hand_7"/>
    <property type="match status" value="2"/>
</dbReference>
<dbReference type="SMART" id="SM00054">
    <property type="entry name" value="EFh"/>
    <property type="match status" value="4"/>
</dbReference>
<dbReference type="SUPFAM" id="SSF47473">
    <property type="entry name" value="EF-hand"/>
    <property type="match status" value="1"/>
</dbReference>
<dbReference type="PROSITE" id="PS00018">
    <property type="entry name" value="EF_HAND_1"/>
    <property type="match status" value="4"/>
</dbReference>
<dbReference type="PROSITE" id="PS50222">
    <property type="entry name" value="EF_HAND_2"/>
    <property type="match status" value="4"/>
</dbReference>
<accession>P28470</accession>
<accession>Q63878</accession>
<protein>
    <recommendedName>
        <fullName>Calcineurin subunit B type 2</fullName>
    </recommendedName>
    <alternativeName>
        <fullName>Calcineurin B-like protein</fullName>
        <shortName>CBLP</shortName>
    </alternativeName>
    <alternativeName>
        <fullName>Protein phosphatase 2B regulatory subunit 2</fullName>
    </alternativeName>
    <alternativeName>
        <fullName>Protein phosphatase 3 regulatory subunit B beta isoform</fullName>
    </alternativeName>
</protein>
<proteinExistence type="evidence at transcript level"/>
<organism>
    <name type="scientific">Rattus norvegicus</name>
    <name type="common">Rat</name>
    <dbReference type="NCBI Taxonomy" id="10116"/>
    <lineage>
        <taxon>Eukaryota</taxon>
        <taxon>Metazoa</taxon>
        <taxon>Chordata</taxon>
        <taxon>Craniata</taxon>
        <taxon>Vertebrata</taxon>
        <taxon>Euteleostomi</taxon>
        <taxon>Mammalia</taxon>
        <taxon>Eutheria</taxon>
        <taxon>Euarchontoglires</taxon>
        <taxon>Glires</taxon>
        <taxon>Rodentia</taxon>
        <taxon>Myomorpha</taxon>
        <taxon>Muroidea</taxon>
        <taxon>Muridae</taxon>
        <taxon>Murinae</taxon>
        <taxon>Rattus</taxon>
    </lineage>
</organism>
<sequence length="176" mass="20291">MGNEASYHSEMGTHFDHDEIKRLGRSFKKMDLDKSGSLSVDEFMSLPELQQNPLVGRVIDIFDTDGNGEVDFREFIVGTSQFSVKGDEEQKLRFAFRIYDMDNDGFISNGELFQVLKMMVGNNLKDWQLQQLVDKSILVLDKDGDGRISFEEFRDVVRTMEIHKKLVVFVDHGQED</sequence>
<gene>
    <name type="primary">Ppp3r2</name>
    <name type="synonym">Cblp</name>
</gene>